<gene>
    <name evidence="1" type="primary">tyrS</name>
    <name type="ordered locus">LJ_0175</name>
</gene>
<dbReference type="EC" id="6.1.1.1" evidence="1"/>
<dbReference type="EMBL" id="AE017198">
    <property type="protein sequence ID" value="AAS08157.1"/>
    <property type="status" value="ALT_INIT"/>
    <property type="molecule type" value="Genomic_DNA"/>
</dbReference>
<dbReference type="RefSeq" id="WP_044496576.1">
    <property type="nucleotide sequence ID" value="NC_005362.1"/>
</dbReference>
<dbReference type="SMR" id="Q74LL0"/>
<dbReference type="GeneID" id="83569628"/>
<dbReference type="KEGG" id="ljo:LJ_0175"/>
<dbReference type="PATRIC" id="fig|257314.6.peg.187"/>
<dbReference type="eggNOG" id="COG0162">
    <property type="taxonomic scope" value="Bacteria"/>
</dbReference>
<dbReference type="HOGENOM" id="CLU_024003_0_3_9"/>
<dbReference type="Proteomes" id="UP000000581">
    <property type="component" value="Chromosome"/>
</dbReference>
<dbReference type="GO" id="GO:0005829">
    <property type="term" value="C:cytosol"/>
    <property type="evidence" value="ECO:0007669"/>
    <property type="project" value="TreeGrafter"/>
</dbReference>
<dbReference type="GO" id="GO:0005524">
    <property type="term" value="F:ATP binding"/>
    <property type="evidence" value="ECO:0007669"/>
    <property type="project" value="UniProtKB-UniRule"/>
</dbReference>
<dbReference type="GO" id="GO:0003723">
    <property type="term" value="F:RNA binding"/>
    <property type="evidence" value="ECO:0007669"/>
    <property type="project" value="UniProtKB-KW"/>
</dbReference>
<dbReference type="GO" id="GO:0004831">
    <property type="term" value="F:tyrosine-tRNA ligase activity"/>
    <property type="evidence" value="ECO:0007669"/>
    <property type="project" value="UniProtKB-UniRule"/>
</dbReference>
<dbReference type="GO" id="GO:0006437">
    <property type="term" value="P:tyrosyl-tRNA aminoacylation"/>
    <property type="evidence" value="ECO:0007669"/>
    <property type="project" value="UniProtKB-UniRule"/>
</dbReference>
<dbReference type="CDD" id="cd00165">
    <property type="entry name" value="S4"/>
    <property type="match status" value="1"/>
</dbReference>
<dbReference type="CDD" id="cd00805">
    <property type="entry name" value="TyrRS_core"/>
    <property type="match status" value="1"/>
</dbReference>
<dbReference type="FunFam" id="1.10.240.10:FF:000001">
    <property type="entry name" value="Tyrosine--tRNA ligase"/>
    <property type="match status" value="1"/>
</dbReference>
<dbReference type="Gene3D" id="3.40.50.620">
    <property type="entry name" value="HUPs"/>
    <property type="match status" value="1"/>
</dbReference>
<dbReference type="Gene3D" id="3.10.290.10">
    <property type="entry name" value="RNA-binding S4 domain"/>
    <property type="match status" value="1"/>
</dbReference>
<dbReference type="Gene3D" id="1.10.240.10">
    <property type="entry name" value="Tyrosyl-Transfer RNA Synthetase"/>
    <property type="match status" value="1"/>
</dbReference>
<dbReference type="HAMAP" id="MF_02006">
    <property type="entry name" value="Tyr_tRNA_synth_type1"/>
    <property type="match status" value="1"/>
</dbReference>
<dbReference type="InterPro" id="IPR001412">
    <property type="entry name" value="aa-tRNA-synth_I_CS"/>
</dbReference>
<dbReference type="InterPro" id="IPR002305">
    <property type="entry name" value="aa-tRNA-synth_Ic"/>
</dbReference>
<dbReference type="InterPro" id="IPR014729">
    <property type="entry name" value="Rossmann-like_a/b/a_fold"/>
</dbReference>
<dbReference type="InterPro" id="IPR002942">
    <property type="entry name" value="S4_RNA-bd"/>
</dbReference>
<dbReference type="InterPro" id="IPR036986">
    <property type="entry name" value="S4_RNA-bd_sf"/>
</dbReference>
<dbReference type="InterPro" id="IPR054608">
    <property type="entry name" value="SYY-like_C"/>
</dbReference>
<dbReference type="InterPro" id="IPR002307">
    <property type="entry name" value="Tyr-tRNA-ligase"/>
</dbReference>
<dbReference type="InterPro" id="IPR024088">
    <property type="entry name" value="Tyr-tRNA-ligase_bac-type"/>
</dbReference>
<dbReference type="InterPro" id="IPR024107">
    <property type="entry name" value="Tyr-tRNA-ligase_bac_1"/>
</dbReference>
<dbReference type="NCBIfam" id="TIGR00234">
    <property type="entry name" value="tyrS"/>
    <property type="match status" value="1"/>
</dbReference>
<dbReference type="PANTHER" id="PTHR11766:SF0">
    <property type="entry name" value="TYROSINE--TRNA LIGASE, MITOCHONDRIAL"/>
    <property type="match status" value="1"/>
</dbReference>
<dbReference type="PANTHER" id="PTHR11766">
    <property type="entry name" value="TYROSYL-TRNA SYNTHETASE"/>
    <property type="match status" value="1"/>
</dbReference>
<dbReference type="Pfam" id="PF22421">
    <property type="entry name" value="SYY_C-terminal"/>
    <property type="match status" value="1"/>
</dbReference>
<dbReference type="Pfam" id="PF00579">
    <property type="entry name" value="tRNA-synt_1b"/>
    <property type="match status" value="1"/>
</dbReference>
<dbReference type="PRINTS" id="PR01040">
    <property type="entry name" value="TRNASYNTHTYR"/>
</dbReference>
<dbReference type="SMART" id="SM00363">
    <property type="entry name" value="S4"/>
    <property type="match status" value="1"/>
</dbReference>
<dbReference type="SUPFAM" id="SSF55174">
    <property type="entry name" value="Alpha-L RNA-binding motif"/>
    <property type="match status" value="1"/>
</dbReference>
<dbReference type="SUPFAM" id="SSF52374">
    <property type="entry name" value="Nucleotidylyl transferase"/>
    <property type="match status" value="1"/>
</dbReference>
<dbReference type="PROSITE" id="PS00178">
    <property type="entry name" value="AA_TRNA_LIGASE_I"/>
    <property type="match status" value="1"/>
</dbReference>
<dbReference type="PROSITE" id="PS50889">
    <property type="entry name" value="S4"/>
    <property type="match status" value="1"/>
</dbReference>
<organism>
    <name type="scientific">Lactobacillus johnsonii (strain CNCM I-12250 / La1 / NCC 533)</name>
    <dbReference type="NCBI Taxonomy" id="257314"/>
    <lineage>
        <taxon>Bacteria</taxon>
        <taxon>Bacillati</taxon>
        <taxon>Bacillota</taxon>
        <taxon>Bacilli</taxon>
        <taxon>Lactobacillales</taxon>
        <taxon>Lactobacillaceae</taxon>
        <taxon>Lactobacillus</taxon>
    </lineage>
</organism>
<protein>
    <recommendedName>
        <fullName evidence="1">Tyrosine--tRNA ligase</fullName>
        <ecNumber evidence="1">6.1.1.1</ecNumber>
    </recommendedName>
    <alternativeName>
        <fullName evidence="1">Tyrosyl-tRNA synthetase</fullName>
        <shortName evidence="1">TyrRS</shortName>
    </alternativeName>
</protein>
<keyword id="KW-0030">Aminoacyl-tRNA synthetase</keyword>
<keyword id="KW-0067">ATP-binding</keyword>
<keyword id="KW-0963">Cytoplasm</keyword>
<keyword id="KW-0436">Ligase</keyword>
<keyword id="KW-0547">Nucleotide-binding</keyword>
<keyword id="KW-0648">Protein biosynthesis</keyword>
<keyword id="KW-0694">RNA-binding</keyword>
<proteinExistence type="inferred from homology"/>
<name>SYY_LACJO</name>
<accession>Q74LL0</accession>
<sequence length="420" mass="47754">MAKFDILEDLKWRGAINQETDEEGLRKYLAEHDDLALYCGTDPTGDSLHIGHLIPFMILKRFQMAGYHPVILIGGGTGAIGDPSGRKTERTLQTAEQVKHNEEKLTAQMKKLFGTENFEIRNNAEWLGKMNLLDFLRDYGKFFQVNNMINKDVVASRLENGISFTEFSYQILQAIDFYHLNKDNGVQMQIGGSDQWGNITAGIDLIHKLDGSDRPAFGLTIPLMLKADGTKFGKSAGGAVWLDPEKTSPYEFYQFWINQDDRDVVKYLKYFTFLSREEIEDLAEKTEKEPWKRAAQKRLAEEVTKFVHGEEGLKEAQIITEALFSGNVKSLSVPQIEQALKNAPSAEATHEAKNIVEFLVETKIEPSKRQAREDVKNGAIYVNGERQDDIDFIIEPDSDFDGKYVIIRKGKRKYTLVKIK</sequence>
<feature type="chain" id="PRO_0000234717" description="Tyrosine--tRNA ligase">
    <location>
        <begin position="1"/>
        <end position="420"/>
    </location>
</feature>
<feature type="domain" description="S4 RNA-binding" evidence="1">
    <location>
        <begin position="353"/>
        <end position="419"/>
    </location>
</feature>
<feature type="short sequence motif" description="'HIGH' region">
    <location>
        <begin position="43"/>
        <end position="52"/>
    </location>
</feature>
<feature type="short sequence motif" description="'KMSKS' region">
    <location>
        <begin position="231"/>
        <end position="235"/>
    </location>
</feature>
<feature type="binding site" evidence="1">
    <location>
        <position position="38"/>
    </location>
    <ligand>
        <name>L-tyrosine</name>
        <dbReference type="ChEBI" id="CHEBI:58315"/>
    </ligand>
</feature>
<feature type="binding site" evidence="1">
    <location>
        <position position="169"/>
    </location>
    <ligand>
        <name>L-tyrosine</name>
        <dbReference type="ChEBI" id="CHEBI:58315"/>
    </ligand>
</feature>
<feature type="binding site" evidence="1">
    <location>
        <position position="173"/>
    </location>
    <ligand>
        <name>L-tyrosine</name>
        <dbReference type="ChEBI" id="CHEBI:58315"/>
    </ligand>
</feature>
<feature type="binding site" evidence="1">
    <location>
        <position position="234"/>
    </location>
    <ligand>
        <name>ATP</name>
        <dbReference type="ChEBI" id="CHEBI:30616"/>
    </ligand>
</feature>
<evidence type="ECO:0000255" key="1">
    <source>
        <dbReference type="HAMAP-Rule" id="MF_02006"/>
    </source>
</evidence>
<evidence type="ECO:0000305" key="2"/>
<reference key="1">
    <citation type="journal article" date="2004" name="Proc. Natl. Acad. Sci. U.S.A.">
        <title>The genome sequence of the probiotic intestinal bacterium Lactobacillus johnsonii NCC 533.</title>
        <authorList>
            <person name="Pridmore R.D."/>
            <person name="Berger B."/>
            <person name="Desiere F."/>
            <person name="Vilanova D."/>
            <person name="Barretto C."/>
            <person name="Pittet A.-C."/>
            <person name="Zwahlen M.-C."/>
            <person name="Rouvet M."/>
            <person name="Altermann E."/>
            <person name="Barrangou R."/>
            <person name="Mollet B."/>
            <person name="Mercenier A."/>
            <person name="Klaenhammer T."/>
            <person name="Arigoni F."/>
            <person name="Schell M.A."/>
        </authorList>
    </citation>
    <scope>NUCLEOTIDE SEQUENCE [LARGE SCALE GENOMIC DNA]</scope>
    <source>
        <strain>CNCM I-1225 / La1 / NCC 533</strain>
    </source>
</reference>
<comment type="function">
    <text evidence="1">Catalyzes the attachment of tyrosine to tRNA(Tyr) in a two-step reaction: tyrosine is first activated by ATP to form Tyr-AMP and then transferred to the acceptor end of tRNA(Tyr).</text>
</comment>
<comment type="catalytic activity">
    <reaction evidence="1">
        <text>tRNA(Tyr) + L-tyrosine + ATP = L-tyrosyl-tRNA(Tyr) + AMP + diphosphate + H(+)</text>
        <dbReference type="Rhea" id="RHEA:10220"/>
        <dbReference type="Rhea" id="RHEA-COMP:9706"/>
        <dbReference type="Rhea" id="RHEA-COMP:9707"/>
        <dbReference type="ChEBI" id="CHEBI:15378"/>
        <dbReference type="ChEBI" id="CHEBI:30616"/>
        <dbReference type="ChEBI" id="CHEBI:33019"/>
        <dbReference type="ChEBI" id="CHEBI:58315"/>
        <dbReference type="ChEBI" id="CHEBI:78442"/>
        <dbReference type="ChEBI" id="CHEBI:78536"/>
        <dbReference type="ChEBI" id="CHEBI:456215"/>
        <dbReference type="EC" id="6.1.1.1"/>
    </reaction>
</comment>
<comment type="subunit">
    <text evidence="1">Homodimer.</text>
</comment>
<comment type="subcellular location">
    <subcellularLocation>
        <location evidence="1">Cytoplasm</location>
    </subcellularLocation>
</comment>
<comment type="similarity">
    <text evidence="1">Belongs to the class-I aminoacyl-tRNA synthetase family. TyrS type 1 subfamily.</text>
</comment>
<comment type="sequence caution" evidence="2">
    <conflict type="erroneous initiation">
        <sequence resource="EMBL-CDS" id="AAS08157"/>
    </conflict>
</comment>